<reference key="1">
    <citation type="journal article" date="2003" name="Lancet">
        <title>Genome sequence of Vibrio parahaemolyticus: a pathogenic mechanism distinct from that of V. cholerae.</title>
        <authorList>
            <person name="Makino K."/>
            <person name="Oshima K."/>
            <person name="Kurokawa K."/>
            <person name="Yokoyama K."/>
            <person name="Uda T."/>
            <person name="Tagomori K."/>
            <person name="Iijima Y."/>
            <person name="Najima M."/>
            <person name="Nakano M."/>
            <person name="Yamashita A."/>
            <person name="Kubota Y."/>
            <person name="Kimura S."/>
            <person name="Yasunaga T."/>
            <person name="Honda T."/>
            <person name="Shinagawa H."/>
            <person name="Hattori M."/>
            <person name="Iida T."/>
        </authorList>
    </citation>
    <scope>NUCLEOTIDE SEQUENCE [LARGE SCALE GENOMIC DNA]</scope>
    <source>
        <strain>RIMD 2210633</strain>
    </source>
</reference>
<feature type="chain" id="PRO_0000192710" description="UPF0276 protein VP3015">
    <location>
        <begin position="1"/>
        <end position="288"/>
    </location>
</feature>
<accession>Q87KG2</accession>
<dbReference type="EMBL" id="BA000031">
    <property type="protein sequence ID" value="BAC61278.1"/>
    <property type="molecule type" value="Genomic_DNA"/>
</dbReference>
<dbReference type="RefSeq" id="NP_799394.1">
    <property type="nucleotide sequence ID" value="NC_004603.1"/>
</dbReference>
<dbReference type="RefSeq" id="WP_005458570.1">
    <property type="nucleotide sequence ID" value="NC_004603.1"/>
</dbReference>
<dbReference type="SMR" id="Q87KG2"/>
<dbReference type="GeneID" id="1190607"/>
<dbReference type="KEGG" id="vpa:VP3015"/>
<dbReference type="PATRIC" id="fig|223926.6.peg.2898"/>
<dbReference type="eggNOG" id="COG3220">
    <property type="taxonomic scope" value="Bacteria"/>
</dbReference>
<dbReference type="HOGENOM" id="CLU_064263_0_0_6"/>
<dbReference type="Proteomes" id="UP000002493">
    <property type="component" value="Chromosome 1"/>
</dbReference>
<dbReference type="Gene3D" id="3.20.20.150">
    <property type="entry name" value="Divalent-metal-dependent TIM barrel enzymes"/>
    <property type="match status" value="1"/>
</dbReference>
<dbReference type="HAMAP" id="MF_00697">
    <property type="entry name" value="UPF0276"/>
    <property type="match status" value="1"/>
</dbReference>
<dbReference type="InterPro" id="IPR007801">
    <property type="entry name" value="MbnB/TglH/ChrH"/>
</dbReference>
<dbReference type="InterPro" id="IPR036237">
    <property type="entry name" value="Xyl_isomerase-like_sf"/>
</dbReference>
<dbReference type="NCBIfam" id="NF003818">
    <property type="entry name" value="PRK05409.1"/>
    <property type="match status" value="1"/>
</dbReference>
<dbReference type="PANTHER" id="PTHR42194">
    <property type="entry name" value="UPF0276 PROTEIN HI_1600"/>
    <property type="match status" value="1"/>
</dbReference>
<dbReference type="PANTHER" id="PTHR42194:SF1">
    <property type="entry name" value="UPF0276 PROTEIN HI_1600"/>
    <property type="match status" value="1"/>
</dbReference>
<dbReference type="Pfam" id="PF05114">
    <property type="entry name" value="MbnB_TglH_ChrH"/>
    <property type="match status" value="1"/>
</dbReference>
<dbReference type="SUPFAM" id="SSF51658">
    <property type="entry name" value="Xylose isomerase-like"/>
    <property type="match status" value="1"/>
</dbReference>
<protein>
    <recommendedName>
        <fullName evidence="1">UPF0276 protein VP3015</fullName>
    </recommendedName>
</protein>
<name>Y3015_VIBPA</name>
<evidence type="ECO:0000255" key="1">
    <source>
        <dbReference type="HAMAP-Rule" id="MF_00697"/>
    </source>
</evidence>
<proteinExistence type="inferred from homology"/>
<gene>
    <name type="ordered locus">VP3015</name>
</gene>
<organism>
    <name type="scientific">Vibrio parahaemolyticus serotype O3:K6 (strain RIMD 2210633)</name>
    <dbReference type="NCBI Taxonomy" id="223926"/>
    <lineage>
        <taxon>Bacteria</taxon>
        <taxon>Pseudomonadati</taxon>
        <taxon>Pseudomonadota</taxon>
        <taxon>Gammaproteobacteria</taxon>
        <taxon>Vibrionales</taxon>
        <taxon>Vibrionaceae</taxon>
        <taxon>Vibrio</taxon>
    </lineage>
</organism>
<sequence>MKHYDFHPLVGVGLRTPHLDFFQQQRPELSWLEIHSENYFQPNAAERKYLHTLREQYQISCHGIGLSLGSVERVSQVHLAQLKALIDAIDPMFVSDHLSWSENGGHYFNDLLPLPYTEEALNVFTRNVLEVQDYLQREILIENPSSYVKFQHSTISEWEFLAEVQQRTSCRLLLDLNNVHVSAFNHGFDCNTYLSAIPADKVDEIHLAGFTIKQLDKGEIWIDTHSRPVSTEVWKLYQHWIEQYGPRHTLIEWDLDIPAPEVLLAEAEKASLLLSQITTPLSATRKAS</sequence>
<comment type="similarity">
    <text evidence="1">Belongs to the UPF0276 family.</text>
</comment>